<name>NIKO_RHOCB</name>
<comment type="function">
    <text evidence="2 4">Part of the energy-coupling factor (ECF) transporter complex NikMNQO involved in nickel import (PubMed:16352848). The complex confers nickel uptake upon expression in E.coli (PubMed:16352848). Shows very low activity with cobalt (PubMed:16352848). Presumably responsible for energy coupling to the transport system (Probable).</text>
</comment>
<comment type="catalytic activity">
    <reaction evidence="2">
        <text>Ni(2+)(out) + ATP + H2O = Ni(2+)(in) + ADP + phosphate + H(+)</text>
        <dbReference type="Rhea" id="RHEA:15557"/>
        <dbReference type="ChEBI" id="CHEBI:15377"/>
        <dbReference type="ChEBI" id="CHEBI:15378"/>
        <dbReference type="ChEBI" id="CHEBI:30616"/>
        <dbReference type="ChEBI" id="CHEBI:43474"/>
        <dbReference type="ChEBI" id="CHEBI:49786"/>
        <dbReference type="ChEBI" id="CHEBI:456216"/>
        <dbReference type="EC" id="7.2.2.11"/>
    </reaction>
    <physiologicalReaction direction="left-to-right" evidence="5">
        <dbReference type="Rhea" id="RHEA:15558"/>
    </physiologicalReaction>
</comment>
<comment type="subunit">
    <text evidence="5">Forms an energy-coupling factor (ECF) transporter complex composed of an ATP-binding protein (A component, NikO), a transmembrane protein (T component, NikQ) and a fused possible substrate-capture protein (S component, NikMN) of unknown stoichimetry.</text>
</comment>
<comment type="subcellular location">
    <subcellularLocation>
        <location evidence="4">Cell inner membrane</location>
        <topology evidence="4">Peripheral membrane protein</topology>
    </subcellularLocation>
</comment>
<comment type="similarity">
    <text evidence="4">Belongs to the ABC transporter superfamily.</text>
</comment>
<gene>
    <name evidence="3" type="primary">nikO</name>
    <name type="synonym">cbiO2</name>
    <name type="ordered locus">RCAP_rcc01032</name>
</gene>
<protein>
    <recommendedName>
        <fullName evidence="4">Nickel import ATP-binding protein NikO</fullName>
        <ecNumber evidence="2">7.2.2.11</ecNumber>
    </recommendedName>
    <alternativeName>
        <fullName>Energy-coupling factor transporter ATP-binding protein NikO</fullName>
        <shortName>ECF transporter A component NikO</shortName>
    </alternativeName>
</protein>
<feature type="chain" id="PRO_0000411086" description="Nickel import ATP-binding protein NikO">
    <location>
        <begin position="1"/>
        <end position="254"/>
    </location>
</feature>
<feature type="domain" description="ABC transporter" evidence="1">
    <location>
        <begin position="5"/>
        <end position="246"/>
    </location>
</feature>
<feature type="binding site" evidence="1">
    <location>
        <begin position="37"/>
        <end position="44"/>
    </location>
    <ligand>
        <name>ATP</name>
        <dbReference type="ChEBI" id="CHEBI:30616"/>
    </ligand>
</feature>
<keyword id="KW-0067">ATP-binding</keyword>
<keyword id="KW-0997">Cell inner membrane</keyword>
<keyword id="KW-1003">Cell membrane</keyword>
<keyword id="KW-0406">Ion transport</keyword>
<keyword id="KW-0472">Membrane</keyword>
<keyword id="KW-0533">Nickel</keyword>
<keyword id="KW-0921">Nickel transport</keyword>
<keyword id="KW-0547">Nucleotide-binding</keyword>
<keyword id="KW-1185">Reference proteome</keyword>
<keyword id="KW-1278">Translocase</keyword>
<keyword id="KW-0813">Transport</keyword>
<accession>D5AQY6</accession>
<dbReference type="EC" id="7.2.2.11" evidence="2"/>
<dbReference type="EMBL" id="CP001312">
    <property type="protein sequence ID" value="ADE84792.1"/>
    <property type="molecule type" value="Genomic_DNA"/>
</dbReference>
<dbReference type="RefSeq" id="WP_013066771.1">
    <property type="nucleotide sequence ID" value="NC_014034.1"/>
</dbReference>
<dbReference type="SMR" id="D5AQY6"/>
<dbReference type="STRING" id="272942.RCAP_rcc01032"/>
<dbReference type="TCDB" id="3.A.1.23.7">
    <property type="family name" value="the atp-binding cassette (abc) superfamily"/>
</dbReference>
<dbReference type="GeneID" id="31489959"/>
<dbReference type="KEGG" id="rcp:RCAP_rcc01032"/>
<dbReference type="eggNOG" id="COG1122">
    <property type="taxonomic scope" value="Bacteria"/>
</dbReference>
<dbReference type="HOGENOM" id="CLU_000604_1_22_5"/>
<dbReference type="OrthoDB" id="9782163at2"/>
<dbReference type="Proteomes" id="UP000002361">
    <property type="component" value="Chromosome"/>
</dbReference>
<dbReference type="GO" id="GO:0043190">
    <property type="term" value="C:ATP-binding cassette (ABC) transporter complex"/>
    <property type="evidence" value="ECO:0000314"/>
    <property type="project" value="UniProtKB"/>
</dbReference>
<dbReference type="GO" id="GO:0005524">
    <property type="term" value="F:ATP binding"/>
    <property type="evidence" value="ECO:0007669"/>
    <property type="project" value="UniProtKB-KW"/>
</dbReference>
<dbReference type="GO" id="GO:0016887">
    <property type="term" value="F:ATP hydrolysis activity"/>
    <property type="evidence" value="ECO:0007669"/>
    <property type="project" value="InterPro"/>
</dbReference>
<dbReference type="GO" id="GO:0042626">
    <property type="term" value="F:ATPase-coupled transmembrane transporter activity"/>
    <property type="evidence" value="ECO:0007669"/>
    <property type="project" value="TreeGrafter"/>
</dbReference>
<dbReference type="GO" id="GO:0015675">
    <property type="term" value="P:nickel cation transport"/>
    <property type="evidence" value="ECO:0000314"/>
    <property type="project" value="UniProtKB"/>
</dbReference>
<dbReference type="CDD" id="cd03225">
    <property type="entry name" value="ABC_cobalt_CbiO_domain1"/>
    <property type="match status" value="1"/>
</dbReference>
<dbReference type="FunFam" id="3.40.50.300:FF:000224">
    <property type="entry name" value="Energy-coupling factor transporter ATP-binding protein EcfA"/>
    <property type="match status" value="1"/>
</dbReference>
<dbReference type="Gene3D" id="3.40.50.300">
    <property type="entry name" value="P-loop containing nucleotide triphosphate hydrolases"/>
    <property type="match status" value="1"/>
</dbReference>
<dbReference type="InterPro" id="IPR003593">
    <property type="entry name" value="AAA+_ATPase"/>
</dbReference>
<dbReference type="InterPro" id="IPR003439">
    <property type="entry name" value="ABC_transporter-like_ATP-bd"/>
</dbReference>
<dbReference type="InterPro" id="IPR017871">
    <property type="entry name" value="ABC_transporter-like_CS"/>
</dbReference>
<dbReference type="InterPro" id="IPR015856">
    <property type="entry name" value="ABC_transpr_CbiO/EcfA_su"/>
</dbReference>
<dbReference type="InterPro" id="IPR050095">
    <property type="entry name" value="ECF_ABC_transporter_ATP-bd"/>
</dbReference>
<dbReference type="InterPro" id="IPR027417">
    <property type="entry name" value="P-loop_NTPase"/>
</dbReference>
<dbReference type="PANTHER" id="PTHR43553:SF24">
    <property type="entry name" value="ENERGY-COUPLING FACTOR TRANSPORTER ATP-BINDING PROTEIN ECFA1"/>
    <property type="match status" value="1"/>
</dbReference>
<dbReference type="PANTHER" id="PTHR43553">
    <property type="entry name" value="HEAVY METAL TRANSPORTER"/>
    <property type="match status" value="1"/>
</dbReference>
<dbReference type="Pfam" id="PF00005">
    <property type="entry name" value="ABC_tran"/>
    <property type="match status" value="1"/>
</dbReference>
<dbReference type="SMART" id="SM00382">
    <property type="entry name" value="AAA"/>
    <property type="match status" value="1"/>
</dbReference>
<dbReference type="SUPFAM" id="SSF52540">
    <property type="entry name" value="P-loop containing nucleoside triphosphate hydrolases"/>
    <property type="match status" value="1"/>
</dbReference>
<dbReference type="PROSITE" id="PS00211">
    <property type="entry name" value="ABC_TRANSPORTER_1"/>
    <property type="match status" value="1"/>
</dbReference>
<dbReference type="PROSITE" id="PS50893">
    <property type="entry name" value="ABC_TRANSPORTER_2"/>
    <property type="match status" value="1"/>
</dbReference>
<organism>
    <name type="scientific">Rhodobacter capsulatus (strain ATCC BAA-309 / NBRC 16581 / SB1003)</name>
    <dbReference type="NCBI Taxonomy" id="272942"/>
    <lineage>
        <taxon>Bacteria</taxon>
        <taxon>Pseudomonadati</taxon>
        <taxon>Pseudomonadota</taxon>
        <taxon>Alphaproteobacteria</taxon>
        <taxon>Rhodobacterales</taxon>
        <taxon>Rhodobacter group</taxon>
        <taxon>Rhodobacter</taxon>
    </lineage>
</organism>
<sequence>MTPAFELQGVQFAYKGVPALNGLDLTLPLGRRTALLGANGSGKSTLLRLLDGLQFPAAGRISAFGTPLTEAMFTDEAAAIAFRRRVGFVFQNPEVQLFCPSVFDELAFGPLQLHWPKERIRARVARAIAQFGLGPLAGRPPHRLSGGEKKRVALASVLILDPEVLLLDEPTAALDPQATDDIAALLETEFGARNPGRTLIFSSHDLDLVARIADHVVVLEAGKVAAAGPAAEVLARTALLRRARLLPGFDGTAP</sequence>
<proteinExistence type="evidence at protein level"/>
<reference key="1">
    <citation type="journal article" date="2010" name="J. Bacteriol.">
        <title>Complete genome sequence of the photosynthetic purple nonsulfur bacterium Rhodobacter capsulatus SB 1003.</title>
        <authorList>
            <person name="Strnad H."/>
            <person name="Lapidus A."/>
            <person name="Paces J."/>
            <person name="Ulbrich P."/>
            <person name="Vlcek C."/>
            <person name="Paces V."/>
            <person name="Haselkorn R."/>
        </authorList>
    </citation>
    <scope>NUCLEOTIDE SEQUENCE [LARGE SCALE GENOMIC DNA]</scope>
    <source>
        <strain>ATCC BAA-309 / NBRC 16581 / SB1003</strain>
    </source>
</reference>
<reference key="2">
    <citation type="journal article" date="2006" name="J. Bacteriol.">
        <title>Comparative and functional genomic analysis of prokaryotic nickel and cobalt uptake transporters: evidence for a novel group of ATP-binding cassette transporters.</title>
        <authorList>
            <person name="Rodionov D.A."/>
            <person name="Hebbeln P."/>
            <person name="Gelfand M.S."/>
            <person name="Eitinger T."/>
        </authorList>
    </citation>
    <scope>FUNCTION IN NICKEL TRANSPORT</scope>
    <scope>TRANSPORTER ACTIVITY</scope>
    <scope>SUBSTRATES</scope>
    <scope>SUBUNIT</scope>
    <scope>EXPRESSION IN E.COLI</scope>
    <source>
        <strain>ATCC BAA-309 / NBRC 16581 / SB1003</strain>
    </source>
</reference>
<evidence type="ECO:0000255" key="1">
    <source>
        <dbReference type="PROSITE-ProRule" id="PRU00434"/>
    </source>
</evidence>
<evidence type="ECO:0000269" key="2">
    <source>
    </source>
</evidence>
<evidence type="ECO:0000303" key="3">
    <source>
    </source>
</evidence>
<evidence type="ECO:0000305" key="4"/>
<evidence type="ECO:0000305" key="5">
    <source>
    </source>
</evidence>